<keyword id="KW-0240">DNA-directed RNA polymerase</keyword>
<keyword id="KW-0548">Nucleotidyltransferase</keyword>
<keyword id="KW-1185">Reference proteome</keyword>
<keyword id="KW-0804">Transcription</keyword>
<keyword id="KW-0808">Transferase</keyword>
<evidence type="ECO:0000255" key="1">
    <source>
        <dbReference type="HAMAP-Rule" id="MF_00059"/>
    </source>
</evidence>
<proteinExistence type="inferred from homology"/>
<accession>Q5ZYL8</accession>
<feature type="chain" id="PRO_0000175323" description="DNA-directed RNA polymerase subunit alpha">
    <location>
        <begin position="1"/>
        <end position="330"/>
    </location>
</feature>
<feature type="region of interest" description="Alpha N-terminal domain (alpha-NTD)" evidence="1">
    <location>
        <begin position="1"/>
        <end position="237"/>
    </location>
</feature>
<feature type="region of interest" description="Alpha C-terminal domain (alpha-CTD)" evidence="1">
    <location>
        <begin position="251"/>
        <end position="330"/>
    </location>
</feature>
<comment type="function">
    <text evidence="1">DNA-dependent RNA polymerase catalyzes the transcription of DNA into RNA using the four ribonucleoside triphosphates as substrates.</text>
</comment>
<comment type="catalytic activity">
    <reaction evidence="1">
        <text>RNA(n) + a ribonucleoside 5'-triphosphate = RNA(n+1) + diphosphate</text>
        <dbReference type="Rhea" id="RHEA:21248"/>
        <dbReference type="Rhea" id="RHEA-COMP:14527"/>
        <dbReference type="Rhea" id="RHEA-COMP:17342"/>
        <dbReference type="ChEBI" id="CHEBI:33019"/>
        <dbReference type="ChEBI" id="CHEBI:61557"/>
        <dbReference type="ChEBI" id="CHEBI:140395"/>
        <dbReference type="EC" id="2.7.7.6"/>
    </reaction>
</comment>
<comment type="subunit">
    <text evidence="1">Homodimer. The RNAP catalytic core consists of 2 alpha, 1 beta, 1 beta' and 1 omega subunit. When a sigma factor is associated with the core the holoenzyme is formed, which can initiate transcription.</text>
</comment>
<comment type="domain">
    <text evidence="1">The N-terminal domain is essential for RNAP assembly and basal transcription, whereas the C-terminal domain is involved in interaction with transcriptional regulators and with upstream promoter elements.</text>
</comment>
<comment type="similarity">
    <text evidence="1">Belongs to the RNA polymerase alpha chain family.</text>
</comment>
<reference key="1">
    <citation type="journal article" date="2004" name="Science">
        <title>The genomic sequence of the accidental pathogen Legionella pneumophila.</title>
        <authorList>
            <person name="Chien M."/>
            <person name="Morozova I."/>
            <person name="Shi S."/>
            <person name="Sheng H."/>
            <person name="Chen J."/>
            <person name="Gomez S.M."/>
            <person name="Asamani G."/>
            <person name="Hill K."/>
            <person name="Nuara J."/>
            <person name="Feder M."/>
            <person name="Rineer J."/>
            <person name="Greenberg J.J."/>
            <person name="Steshenko V."/>
            <person name="Park S.H."/>
            <person name="Zhao B."/>
            <person name="Teplitskaya E."/>
            <person name="Edwards J.R."/>
            <person name="Pampou S."/>
            <person name="Georghiou A."/>
            <person name="Chou I.-C."/>
            <person name="Iannuccilli W."/>
            <person name="Ulz M.E."/>
            <person name="Kim D.H."/>
            <person name="Geringer-Sameth A."/>
            <person name="Goldsberry C."/>
            <person name="Morozov P."/>
            <person name="Fischer S.G."/>
            <person name="Segal G."/>
            <person name="Qu X."/>
            <person name="Rzhetsky A."/>
            <person name="Zhang P."/>
            <person name="Cayanis E."/>
            <person name="De Jong P.J."/>
            <person name="Ju J."/>
            <person name="Kalachikov S."/>
            <person name="Shuman H.A."/>
            <person name="Russo J.J."/>
        </authorList>
    </citation>
    <scope>NUCLEOTIDE SEQUENCE [LARGE SCALE GENOMIC DNA]</scope>
    <source>
        <strain>Philadelphia 1 / ATCC 33152 / DSM 7513</strain>
    </source>
</reference>
<sequence>MYTEINEMLTPKVLKVQAESPYKARIVLEPLERGFGHTLGNALRRILLSSMPGSAITEASIDGVLHEYSTIEGVQEDVVDLLLNLKSVAIKLTVGNEAQITLNKEGPCQVTAGDIQLTHGQEIINPELVIANLNEKGKLNMTLKVERGIGFHNTDAFVRYHDDEIEKKTVGKLKIDNSFSPVKKVAYFVDSARVENRTDLDKLTIELETNGTIDAEEAIRISASILQRQLHAFVDMKFEESRADNKERNDFDPVLLRSVDDLELTVRSANCLKAENIHYIGDLVQRTESELLKTPNLGKKSLTEIKDVLASRSLSLGMKLENWPPASLGE</sequence>
<gene>
    <name evidence="1" type="primary">rpoA</name>
    <name type="ordered locus">lpg0354</name>
</gene>
<organism>
    <name type="scientific">Legionella pneumophila subsp. pneumophila (strain Philadelphia 1 / ATCC 33152 / DSM 7513)</name>
    <dbReference type="NCBI Taxonomy" id="272624"/>
    <lineage>
        <taxon>Bacteria</taxon>
        <taxon>Pseudomonadati</taxon>
        <taxon>Pseudomonadota</taxon>
        <taxon>Gammaproteobacteria</taxon>
        <taxon>Legionellales</taxon>
        <taxon>Legionellaceae</taxon>
        <taxon>Legionella</taxon>
    </lineage>
</organism>
<name>RPOA_LEGPH</name>
<protein>
    <recommendedName>
        <fullName evidence="1">DNA-directed RNA polymerase subunit alpha</fullName>
        <shortName evidence="1">RNAP subunit alpha</shortName>
        <ecNumber evidence="1">2.7.7.6</ecNumber>
    </recommendedName>
    <alternativeName>
        <fullName evidence="1">RNA polymerase subunit alpha</fullName>
    </alternativeName>
    <alternativeName>
        <fullName evidence="1">Transcriptase subunit alpha</fullName>
    </alternativeName>
</protein>
<dbReference type="EC" id="2.7.7.6" evidence="1"/>
<dbReference type="EMBL" id="AE017354">
    <property type="protein sequence ID" value="AAU26451.1"/>
    <property type="molecule type" value="Genomic_DNA"/>
</dbReference>
<dbReference type="RefSeq" id="WP_010946103.1">
    <property type="nucleotide sequence ID" value="NC_002942.5"/>
</dbReference>
<dbReference type="RefSeq" id="YP_094398.1">
    <property type="nucleotide sequence ID" value="NC_002942.5"/>
</dbReference>
<dbReference type="SMR" id="Q5ZYL8"/>
<dbReference type="STRING" id="272624.lpg0354"/>
<dbReference type="PaxDb" id="272624-lpg0354"/>
<dbReference type="KEGG" id="lpn:lpg0354"/>
<dbReference type="PATRIC" id="fig|272624.6.peg.361"/>
<dbReference type="eggNOG" id="COG0202">
    <property type="taxonomic scope" value="Bacteria"/>
</dbReference>
<dbReference type="HOGENOM" id="CLU_053084_0_0_6"/>
<dbReference type="OrthoDB" id="9805706at2"/>
<dbReference type="Proteomes" id="UP000000609">
    <property type="component" value="Chromosome"/>
</dbReference>
<dbReference type="GO" id="GO:0005737">
    <property type="term" value="C:cytoplasm"/>
    <property type="evidence" value="ECO:0007669"/>
    <property type="project" value="UniProtKB-ARBA"/>
</dbReference>
<dbReference type="GO" id="GO:0000428">
    <property type="term" value="C:DNA-directed RNA polymerase complex"/>
    <property type="evidence" value="ECO:0007669"/>
    <property type="project" value="UniProtKB-KW"/>
</dbReference>
<dbReference type="GO" id="GO:0003677">
    <property type="term" value="F:DNA binding"/>
    <property type="evidence" value="ECO:0007669"/>
    <property type="project" value="UniProtKB-UniRule"/>
</dbReference>
<dbReference type="GO" id="GO:0003899">
    <property type="term" value="F:DNA-directed RNA polymerase activity"/>
    <property type="evidence" value="ECO:0007669"/>
    <property type="project" value="UniProtKB-UniRule"/>
</dbReference>
<dbReference type="GO" id="GO:0046983">
    <property type="term" value="F:protein dimerization activity"/>
    <property type="evidence" value="ECO:0007669"/>
    <property type="project" value="InterPro"/>
</dbReference>
<dbReference type="GO" id="GO:0006351">
    <property type="term" value="P:DNA-templated transcription"/>
    <property type="evidence" value="ECO:0007669"/>
    <property type="project" value="UniProtKB-UniRule"/>
</dbReference>
<dbReference type="CDD" id="cd06928">
    <property type="entry name" value="RNAP_alpha_NTD"/>
    <property type="match status" value="1"/>
</dbReference>
<dbReference type="FunFam" id="1.10.150.20:FF:000001">
    <property type="entry name" value="DNA-directed RNA polymerase subunit alpha"/>
    <property type="match status" value="1"/>
</dbReference>
<dbReference type="FunFam" id="2.170.120.12:FF:000001">
    <property type="entry name" value="DNA-directed RNA polymerase subunit alpha"/>
    <property type="match status" value="1"/>
</dbReference>
<dbReference type="Gene3D" id="1.10.150.20">
    <property type="entry name" value="5' to 3' exonuclease, C-terminal subdomain"/>
    <property type="match status" value="1"/>
</dbReference>
<dbReference type="Gene3D" id="2.170.120.12">
    <property type="entry name" value="DNA-directed RNA polymerase, insert domain"/>
    <property type="match status" value="1"/>
</dbReference>
<dbReference type="Gene3D" id="3.30.1360.10">
    <property type="entry name" value="RNA polymerase, RBP11-like subunit"/>
    <property type="match status" value="1"/>
</dbReference>
<dbReference type="HAMAP" id="MF_00059">
    <property type="entry name" value="RNApol_bact_RpoA"/>
    <property type="match status" value="1"/>
</dbReference>
<dbReference type="InterPro" id="IPR011262">
    <property type="entry name" value="DNA-dir_RNA_pol_insert"/>
</dbReference>
<dbReference type="InterPro" id="IPR011263">
    <property type="entry name" value="DNA-dir_RNA_pol_RpoA/D/Rpb3"/>
</dbReference>
<dbReference type="InterPro" id="IPR011773">
    <property type="entry name" value="DNA-dir_RpoA"/>
</dbReference>
<dbReference type="InterPro" id="IPR036603">
    <property type="entry name" value="RBP11-like"/>
</dbReference>
<dbReference type="InterPro" id="IPR011260">
    <property type="entry name" value="RNAP_asu_C"/>
</dbReference>
<dbReference type="InterPro" id="IPR036643">
    <property type="entry name" value="RNApol_insert_sf"/>
</dbReference>
<dbReference type="NCBIfam" id="NF003513">
    <property type="entry name" value="PRK05182.1-2"/>
    <property type="match status" value="1"/>
</dbReference>
<dbReference type="NCBIfam" id="NF003519">
    <property type="entry name" value="PRK05182.2-5"/>
    <property type="match status" value="1"/>
</dbReference>
<dbReference type="NCBIfam" id="TIGR02027">
    <property type="entry name" value="rpoA"/>
    <property type="match status" value="1"/>
</dbReference>
<dbReference type="Pfam" id="PF01000">
    <property type="entry name" value="RNA_pol_A_bac"/>
    <property type="match status" value="1"/>
</dbReference>
<dbReference type="Pfam" id="PF03118">
    <property type="entry name" value="RNA_pol_A_CTD"/>
    <property type="match status" value="1"/>
</dbReference>
<dbReference type="Pfam" id="PF01193">
    <property type="entry name" value="RNA_pol_L"/>
    <property type="match status" value="1"/>
</dbReference>
<dbReference type="SMART" id="SM00662">
    <property type="entry name" value="RPOLD"/>
    <property type="match status" value="1"/>
</dbReference>
<dbReference type="SUPFAM" id="SSF47789">
    <property type="entry name" value="C-terminal domain of RNA polymerase alpha subunit"/>
    <property type="match status" value="1"/>
</dbReference>
<dbReference type="SUPFAM" id="SSF56553">
    <property type="entry name" value="Insert subdomain of RNA polymerase alpha subunit"/>
    <property type="match status" value="1"/>
</dbReference>
<dbReference type="SUPFAM" id="SSF55257">
    <property type="entry name" value="RBP11-like subunits of RNA polymerase"/>
    <property type="match status" value="1"/>
</dbReference>